<reference key="1">
    <citation type="journal article" date="1991" name="J. Bacteriol.">
        <title>Cloning, characterization, and high-level expression in Escherichia coli of the Saccharopolyspora erythraea gene encoding an acyl carrier protein potentially involved in fatty acid biosynthesis.</title>
        <authorList>
            <person name="Revill W.P."/>
            <person name="Leadlay P.F."/>
        </authorList>
    </citation>
    <scope>NUCLEOTIDE SEQUENCE [GENOMIC DNA]</scope>
    <scope>PHOSPHOPANTETHEINYLATION AT SER-39</scope>
    <source>
        <strain>ATCC 11635 / DSM 40517 / JCM 4748 / NBRC 13426 / NCIMB 8594 / NRRL 2338</strain>
    </source>
</reference>
<reference key="2">
    <citation type="journal article" date="2007" name="Nat. Biotechnol.">
        <title>Complete genome sequence of the erythromycin-producing bacterium Saccharopolyspora erythraea NRRL23338.</title>
        <authorList>
            <person name="Oliynyk M."/>
            <person name="Samborskyy M."/>
            <person name="Lester J.B."/>
            <person name="Mironenko T."/>
            <person name="Scott N."/>
            <person name="Dickens S."/>
            <person name="Haydock S.F."/>
            <person name="Leadlay P.F."/>
        </authorList>
    </citation>
    <scope>NUCLEOTIDE SEQUENCE [LARGE SCALE GENOMIC DNA]</scope>
    <source>
        <strain>ATCC 11635 / DSM 40517 / JCM 4748 / NBRC 13426 / NCIMB 8594 / NRRL 2338</strain>
    </source>
</reference>
<reference key="3">
    <citation type="journal article" date="1987" name="FEBS Lett.">
        <title>A small, discrete acyl carrier protein is involved in de novo fatty acid biosynthesis in Streptomyces erythraeus.</title>
        <authorList>
            <person name="Hale R.S."/>
            <person name="Jordan K.N."/>
            <person name="Leadlay P.F."/>
        </authorList>
    </citation>
    <scope>PROTEIN SEQUENCE OF 1-46</scope>
    <scope>PHOSPHOPANTETHEINYLATION AT SER-39</scope>
    <source>
        <strain>ATCC 11635 / DSM 40517 / JCM 4748 / NBRC 13426 / NCIMB 8594 / NRRL 2338</strain>
    </source>
</reference>
<comment type="function">
    <text>Carrier of the growing fatty acid chain in fatty acid biosynthesis.</text>
</comment>
<comment type="pathway">
    <text evidence="1">Lipid metabolism; fatty acid biosynthesis.</text>
</comment>
<comment type="subcellular location">
    <subcellularLocation>
        <location evidence="1">Cytoplasm</location>
    </subcellularLocation>
</comment>
<comment type="PTM">
    <text>4'-phosphopantetheine is transferred from CoA to a specific serine of apo-ACP by AcpS. This modification is essential for activity because fatty acids are bound in thioester linkage to the sulfhydryl of the prosthetic group.</text>
</comment>
<comment type="similarity">
    <text evidence="1">Belongs to the acyl carrier protein (ACP) family.</text>
</comment>
<evidence type="ECO:0000255" key="1">
    <source>
        <dbReference type="HAMAP-Rule" id="MF_01217"/>
    </source>
</evidence>
<evidence type="ECO:0000255" key="2">
    <source>
        <dbReference type="PROSITE-ProRule" id="PRU00258"/>
    </source>
</evidence>
<evidence type="ECO:0000269" key="3">
    <source>
    </source>
</evidence>
<evidence type="ECO:0000269" key="4">
    <source>
    </source>
</evidence>
<sequence>MDRKEIFERIEQVLAEQLGIPAEQITEEADLREDLGMDSLDLVELVSALEDEVGMRVEQSQLEGIETVGHVMELTLDLVARLATASAADKPEAAS</sequence>
<protein>
    <recommendedName>
        <fullName evidence="1">Acyl carrier protein</fullName>
        <shortName evidence="1">ACP</shortName>
    </recommendedName>
</protein>
<proteinExistence type="evidence at protein level"/>
<name>ACP_SACEN</name>
<keyword id="KW-0963">Cytoplasm</keyword>
<keyword id="KW-0903">Direct protein sequencing</keyword>
<keyword id="KW-0275">Fatty acid biosynthesis</keyword>
<keyword id="KW-0276">Fatty acid metabolism</keyword>
<keyword id="KW-0444">Lipid biosynthesis</keyword>
<keyword id="KW-0443">Lipid metabolism</keyword>
<keyword id="KW-0596">Phosphopantetheine</keyword>
<keyword id="KW-0597">Phosphoprotein</keyword>
<keyword id="KW-1185">Reference proteome</keyword>
<accession>P11830</accession>
<accession>A4FH76</accession>
<dbReference type="EMBL" id="M64477">
    <property type="protein sequence ID" value="AAA26476.1"/>
    <property type="molecule type" value="Genomic_DNA"/>
</dbReference>
<dbReference type="EMBL" id="AM420293">
    <property type="protein sequence ID" value="CAM03401.1"/>
    <property type="molecule type" value="Genomic_DNA"/>
</dbReference>
<dbReference type="PIR" id="A47030">
    <property type="entry name" value="A47030"/>
</dbReference>
<dbReference type="RefSeq" id="WP_011874252.1">
    <property type="nucleotide sequence ID" value="NC_009142.1"/>
</dbReference>
<dbReference type="SMR" id="P11830"/>
<dbReference type="STRING" id="405948.SACE_4132"/>
<dbReference type="KEGG" id="sen:SACE_4132"/>
<dbReference type="eggNOG" id="COG0236">
    <property type="taxonomic scope" value="Bacteria"/>
</dbReference>
<dbReference type="HOGENOM" id="CLU_108696_5_4_11"/>
<dbReference type="OrthoDB" id="4243908at2"/>
<dbReference type="UniPathway" id="UPA00094"/>
<dbReference type="Proteomes" id="UP000006728">
    <property type="component" value="Chromosome"/>
</dbReference>
<dbReference type="GO" id="GO:0005829">
    <property type="term" value="C:cytosol"/>
    <property type="evidence" value="ECO:0007669"/>
    <property type="project" value="TreeGrafter"/>
</dbReference>
<dbReference type="GO" id="GO:0016020">
    <property type="term" value="C:membrane"/>
    <property type="evidence" value="ECO:0007669"/>
    <property type="project" value="GOC"/>
</dbReference>
<dbReference type="GO" id="GO:0000035">
    <property type="term" value="F:acyl binding"/>
    <property type="evidence" value="ECO:0007669"/>
    <property type="project" value="TreeGrafter"/>
</dbReference>
<dbReference type="GO" id="GO:0000036">
    <property type="term" value="F:acyl carrier activity"/>
    <property type="evidence" value="ECO:0007669"/>
    <property type="project" value="UniProtKB-UniRule"/>
</dbReference>
<dbReference type="GO" id="GO:0009245">
    <property type="term" value="P:lipid A biosynthetic process"/>
    <property type="evidence" value="ECO:0007669"/>
    <property type="project" value="TreeGrafter"/>
</dbReference>
<dbReference type="Gene3D" id="1.10.1200.10">
    <property type="entry name" value="ACP-like"/>
    <property type="match status" value="1"/>
</dbReference>
<dbReference type="HAMAP" id="MF_01217">
    <property type="entry name" value="Acyl_carrier"/>
    <property type="match status" value="1"/>
</dbReference>
<dbReference type="InterPro" id="IPR003231">
    <property type="entry name" value="ACP"/>
</dbReference>
<dbReference type="InterPro" id="IPR036736">
    <property type="entry name" value="ACP-like_sf"/>
</dbReference>
<dbReference type="InterPro" id="IPR009081">
    <property type="entry name" value="PP-bd_ACP"/>
</dbReference>
<dbReference type="InterPro" id="IPR006162">
    <property type="entry name" value="Ppantetheine_attach_site"/>
</dbReference>
<dbReference type="NCBIfam" id="NF002148">
    <property type="entry name" value="PRK00982.1-2"/>
    <property type="match status" value="1"/>
</dbReference>
<dbReference type="NCBIfam" id="NF002150">
    <property type="entry name" value="PRK00982.1-4"/>
    <property type="match status" value="1"/>
</dbReference>
<dbReference type="PANTHER" id="PTHR20863">
    <property type="entry name" value="ACYL CARRIER PROTEIN"/>
    <property type="match status" value="1"/>
</dbReference>
<dbReference type="PANTHER" id="PTHR20863:SF76">
    <property type="entry name" value="CARRIER DOMAIN-CONTAINING PROTEIN"/>
    <property type="match status" value="1"/>
</dbReference>
<dbReference type="Pfam" id="PF00550">
    <property type="entry name" value="PP-binding"/>
    <property type="match status" value="1"/>
</dbReference>
<dbReference type="SUPFAM" id="SSF47336">
    <property type="entry name" value="ACP-like"/>
    <property type="match status" value="1"/>
</dbReference>
<dbReference type="PROSITE" id="PS50075">
    <property type="entry name" value="CARRIER"/>
    <property type="match status" value="1"/>
</dbReference>
<dbReference type="PROSITE" id="PS00012">
    <property type="entry name" value="PHOSPHOPANTETHEINE"/>
    <property type="match status" value="1"/>
</dbReference>
<organism>
    <name type="scientific">Saccharopolyspora erythraea (strain ATCC 11635 / DSM 40517 / JCM 4748 / NBRC 13426 / NCIMB 8594 / NRRL 2338)</name>
    <dbReference type="NCBI Taxonomy" id="405948"/>
    <lineage>
        <taxon>Bacteria</taxon>
        <taxon>Bacillati</taxon>
        <taxon>Actinomycetota</taxon>
        <taxon>Actinomycetes</taxon>
        <taxon>Pseudonocardiales</taxon>
        <taxon>Pseudonocardiaceae</taxon>
        <taxon>Saccharopolyspora</taxon>
    </lineage>
</organism>
<gene>
    <name evidence="1" type="primary">acpP</name>
    <name type="ordered locus">SACE_4132</name>
</gene>
<feature type="chain" id="PRO_0000180181" description="Acyl carrier protein">
    <location>
        <begin position="1"/>
        <end position="95"/>
    </location>
</feature>
<feature type="domain" description="Carrier" evidence="2">
    <location>
        <begin position="4"/>
        <end position="79"/>
    </location>
</feature>
<feature type="modified residue" description="O-(pantetheine 4'-phosphoryl)serine" evidence="2 3 4">
    <location>
        <position position="39"/>
    </location>
</feature>